<gene>
    <name evidence="1" type="primary">fabA</name>
    <name type="ordered locus">ECIAI1_0995</name>
</gene>
<feature type="chain" id="PRO_1000201186" description="3-hydroxydecanoyl-[acyl-carrier-protein] dehydratase">
    <location>
        <begin position="1"/>
        <end position="172"/>
    </location>
</feature>
<feature type="active site" evidence="1">
    <location>
        <position position="71"/>
    </location>
</feature>
<proteinExistence type="inferred from homology"/>
<comment type="function">
    <text evidence="1">Necessary for the introduction of cis unsaturation into fatty acids. Catalyzes the dehydration of (3R)-3-hydroxydecanoyl-ACP to E-(2)-decenoyl-ACP and then its isomerization to Z-(3)-decenoyl-ACP. Can catalyze the dehydratase reaction for beta-hydroxyacyl-ACPs with saturated chain lengths up to 16:0, being most active on intermediate chain length.</text>
</comment>
<comment type="catalytic activity">
    <reaction evidence="1">
        <text>a (3R)-hydroxyacyl-[ACP] = a (2E)-enoyl-[ACP] + H2O</text>
        <dbReference type="Rhea" id="RHEA:13097"/>
        <dbReference type="Rhea" id="RHEA-COMP:9925"/>
        <dbReference type="Rhea" id="RHEA-COMP:9945"/>
        <dbReference type="ChEBI" id="CHEBI:15377"/>
        <dbReference type="ChEBI" id="CHEBI:78784"/>
        <dbReference type="ChEBI" id="CHEBI:78827"/>
        <dbReference type="EC" id="4.2.1.59"/>
    </reaction>
</comment>
<comment type="catalytic activity">
    <reaction evidence="1">
        <text>(3R)-hydroxydecanoyl-[ACP] = (2E)-decenoyl-[ACP] + H2O</text>
        <dbReference type="Rhea" id="RHEA:41860"/>
        <dbReference type="Rhea" id="RHEA-COMP:9638"/>
        <dbReference type="Rhea" id="RHEA-COMP:9639"/>
        <dbReference type="ChEBI" id="CHEBI:15377"/>
        <dbReference type="ChEBI" id="CHEBI:78466"/>
        <dbReference type="ChEBI" id="CHEBI:78467"/>
    </reaction>
</comment>
<comment type="catalytic activity">
    <reaction evidence="1">
        <text>(2E)-decenoyl-[ACP] = (3Z)-decenoyl-[ACP]</text>
        <dbReference type="Rhea" id="RHEA:23568"/>
        <dbReference type="Rhea" id="RHEA-COMP:9639"/>
        <dbReference type="Rhea" id="RHEA-COMP:9927"/>
        <dbReference type="ChEBI" id="CHEBI:78467"/>
        <dbReference type="ChEBI" id="CHEBI:78798"/>
        <dbReference type="EC" id="5.3.3.14"/>
    </reaction>
</comment>
<comment type="pathway">
    <text evidence="1">Lipid metabolism; fatty acid biosynthesis.</text>
</comment>
<comment type="subunit">
    <text evidence="1">Homodimer.</text>
</comment>
<comment type="subcellular location">
    <subcellularLocation>
        <location evidence="1">Cytoplasm</location>
    </subcellularLocation>
</comment>
<comment type="similarity">
    <text evidence="1">Belongs to the thioester dehydratase family. FabA subfamily.</text>
</comment>
<protein>
    <recommendedName>
        <fullName evidence="1">3-hydroxydecanoyl-[acyl-carrier-protein] dehydratase</fullName>
        <ecNumber evidence="1">4.2.1.59</ecNumber>
    </recommendedName>
    <alternativeName>
        <fullName evidence="1">3-hydroxyacyl-[acyl-carrier-protein] dehydratase FabA</fullName>
    </alternativeName>
    <alternativeName>
        <fullName evidence="1">Beta-hydroxydecanoyl thioester dehydrase</fullName>
    </alternativeName>
    <alternativeName>
        <fullName evidence="1">Trans-2-decenoyl-[acyl-carrier-protein] isomerase</fullName>
        <ecNumber evidence="1">5.3.3.14</ecNumber>
    </alternativeName>
</protein>
<organism>
    <name type="scientific">Escherichia coli O8 (strain IAI1)</name>
    <dbReference type="NCBI Taxonomy" id="585034"/>
    <lineage>
        <taxon>Bacteria</taxon>
        <taxon>Pseudomonadati</taxon>
        <taxon>Pseudomonadota</taxon>
        <taxon>Gammaproteobacteria</taxon>
        <taxon>Enterobacterales</taxon>
        <taxon>Enterobacteriaceae</taxon>
        <taxon>Escherichia</taxon>
    </lineage>
</organism>
<name>FABA_ECO8A</name>
<keyword id="KW-0963">Cytoplasm</keyword>
<keyword id="KW-0275">Fatty acid biosynthesis</keyword>
<keyword id="KW-0276">Fatty acid metabolism</keyword>
<keyword id="KW-0413">Isomerase</keyword>
<keyword id="KW-0444">Lipid biosynthesis</keyword>
<keyword id="KW-0443">Lipid metabolism</keyword>
<keyword id="KW-0456">Lyase</keyword>
<sequence length="172" mass="18969">MVDKRESYTKEDLLASGRGELFGAKGPQLPAPNMLMMDRVVKMTETGGNFDKGYVEAELDINPDLWFFGCHFIGDPVMPGCLGLDAMWQLVGFYLGWLGGEGKGRALGVGEVKFTGQVLPTAKKVTYRIHFKRIVNRRLIMGLADGEVLVDGRLIYTASDLKVGLFQDTSAF</sequence>
<evidence type="ECO:0000255" key="1">
    <source>
        <dbReference type="HAMAP-Rule" id="MF_00405"/>
    </source>
</evidence>
<dbReference type="EC" id="4.2.1.59" evidence="1"/>
<dbReference type="EC" id="5.3.3.14" evidence="1"/>
<dbReference type="EMBL" id="CU928160">
    <property type="protein sequence ID" value="CAQ97859.1"/>
    <property type="molecule type" value="Genomic_DNA"/>
</dbReference>
<dbReference type="RefSeq" id="WP_000227927.1">
    <property type="nucleotide sequence ID" value="NC_011741.1"/>
</dbReference>
<dbReference type="SMR" id="B7M883"/>
<dbReference type="GeneID" id="93776460"/>
<dbReference type="KEGG" id="ecr:ECIAI1_0995"/>
<dbReference type="HOGENOM" id="CLU_097925_0_0_6"/>
<dbReference type="UniPathway" id="UPA00094"/>
<dbReference type="GO" id="GO:0005737">
    <property type="term" value="C:cytoplasm"/>
    <property type="evidence" value="ECO:0007669"/>
    <property type="project" value="UniProtKB-SubCell"/>
</dbReference>
<dbReference type="GO" id="GO:0019171">
    <property type="term" value="F:(3R)-hydroxyacyl-[acyl-carrier-protein] dehydratase activity"/>
    <property type="evidence" value="ECO:0007669"/>
    <property type="project" value="UniProtKB-UniRule"/>
</dbReference>
<dbReference type="GO" id="GO:0034017">
    <property type="term" value="F:trans-2-decenoyl-acyl-carrier-protein isomerase activity"/>
    <property type="evidence" value="ECO:0007669"/>
    <property type="project" value="UniProtKB-UniRule"/>
</dbReference>
<dbReference type="GO" id="GO:0006636">
    <property type="term" value="P:unsaturated fatty acid biosynthetic process"/>
    <property type="evidence" value="ECO:0007669"/>
    <property type="project" value="UniProtKB-UniRule"/>
</dbReference>
<dbReference type="CDD" id="cd01287">
    <property type="entry name" value="FabA"/>
    <property type="match status" value="1"/>
</dbReference>
<dbReference type="FunFam" id="3.10.129.10:FF:000003">
    <property type="entry name" value="3-hydroxydecanoyl-[acyl-carrier-protein] dehydratase"/>
    <property type="match status" value="1"/>
</dbReference>
<dbReference type="Gene3D" id="3.10.129.10">
    <property type="entry name" value="Hotdog Thioesterase"/>
    <property type="match status" value="1"/>
</dbReference>
<dbReference type="HAMAP" id="MF_00405">
    <property type="entry name" value="FabA"/>
    <property type="match status" value="1"/>
</dbReference>
<dbReference type="InterPro" id="IPR010083">
    <property type="entry name" value="FabA"/>
</dbReference>
<dbReference type="InterPro" id="IPR013114">
    <property type="entry name" value="FabA_FabZ"/>
</dbReference>
<dbReference type="InterPro" id="IPR029069">
    <property type="entry name" value="HotDog_dom_sf"/>
</dbReference>
<dbReference type="NCBIfam" id="TIGR01749">
    <property type="entry name" value="fabA"/>
    <property type="match status" value="1"/>
</dbReference>
<dbReference type="NCBIfam" id="NF003509">
    <property type="entry name" value="PRK05174.1"/>
    <property type="match status" value="1"/>
</dbReference>
<dbReference type="PANTHER" id="PTHR30272">
    <property type="entry name" value="3-HYDROXYACYL-[ACYL-CARRIER-PROTEIN] DEHYDRATASE"/>
    <property type="match status" value="1"/>
</dbReference>
<dbReference type="PANTHER" id="PTHR30272:SF8">
    <property type="entry name" value="3-HYDROXYDECANOYL-[ACYL-CARRIER-PROTEIN] DEHYDRATASE"/>
    <property type="match status" value="1"/>
</dbReference>
<dbReference type="Pfam" id="PF07977">
    <property type="entry name" value="FabA"/>
    <property type="match status" value="1"/>
</dbReference>
<dbReference type="SUPFAM" id="SSF54637">
    <property type="entry name" value="Thioesterase/thiol ester dehydrase-isomerase"/>
    <property type="match status" value="1"/>
</dbReference>
<accession>B7M883</accession>
<reference key="1">
    <citation type="journal article" date="2009" name="PLoS Genet.">
        <title>Organised genome dynamics in the Escherichia coli species results in highly diverse adaptive paths.</title>
        <authorList>
            <person name="Touchon M."/>
            <person name="Hoede C."/>
            <person name="Tenaillon O."/>
            <person name="Barbe V."/>
            <person name="Baeriswyl S."/>
            <person name="Bidet P."/>
            <person name="Bingen E."/>
            <person name="Bonacorsi S."/>
            <person name="Bouchier C."/>
            <person name="Bouvet O."/>
            <person name="Calteau A."/>
            <person name="Chiapello H."/>
            <person name="Clermont O."/>
            <person name="Cruveiller S."/>
            <person name="Danchin A."/>
            <person name="Diard M."/>
            <person name="Dossat C."/>
            <person name="Karoui M.E."/>
            <person name="Frapy E."/>
            <person name="Garry L."/>
            <person name="Ghigo J.M."/>
            <person name="Gilles A.M."/>
            <person name="Johnson J."/>
            <person name="Le Bouguenec C."/>
            <person name="Lescat M."/>
            <person name="Mangenot S."/>
            <person name="Martinez-Jehanne V."/>
            <person name="Matic I."/>
            <person name="Nassif X."/>
            <person name="Oztas S."/>
            <person name="Petit M.A."/>
            <person name="Pichon C."/>
            <person name="Rouy Z."/>
            <person name="Ruf C.S."/>
            <person name="Schneider D."/>
            <person name="Tourret J."/>
            <person name="Vacherie B."/>
            <person name="Vallenet D."/>
            <person name="Medigue C."/>
            <person name="Rocha E.P.C."/>
            <person name="Denamur E."/>
        </authorList>
    </citation>
    <scope>NUCLEOTIDE SEQUENCE [LARGE SCALE GENOMIC DNA]</scope>
    <source>
        <strain>IAI1</strain>
    </source>
</reference>